<accession>A5VUU3</accession>
<keyword id="KW-0963">Cytoplasm</keyword>
<keyword id="KW-0238">DNA-binding</keyword>
<keyword id="KW-0597">Phosphoprotein</keyword>
<keyword id="KW-0804">Transcription</keyword>
<keyword id="KW-0805">Transcription regulation</keyword>
<keyword id="KW-0902">Two-component regulatory system</keyword>
<evidence type="ECO:0000250" key="1"/>
<evidence type="ECO:0000255" key="2">
    <source>
        <dbReference type="PROSITE-ProRule" id="PRU00169"/>
    </source>
</evidence>
<evidence type="ECO:0000305" key="3"/>
<protein>
    <recommendedName>
        <fullName>Polar-differentiation response regulator DivK</fullName>
    </recommendedName>
</protein>
<feature type="chain" id="PRO_0000363209" description="Polar-differentiation response regulator DivK">
    <location>
        <begin position="1"/>
        <end position="123"/>
    </location>
</feature>
<feature type="domain" description="Response regulatory" evidence="2">
    <location>
        <begin position="4"/>
        <end position="120"/>
    </location>
</feature>
<feature type="modified residue" description="4-aspartylphosphate" evidence="2">
    <location>
        <position position="53"/>
    </location>
</feature>
<dbReference type="EMBL" id="CP000709">
    <property type="protein sequence ID" value="ABQ62265.1"/>
    <property type="status" value="ALT_INIT"/>
    <property type="molecule type" value="Genomic_DNA"/>
</dbReference>
<dbReference type="RefSeq" id="WP_002966022.1">
    <property type="nucleotide sequence ID" value="NC_009504.1"/>
</dbReference>
<dbReference type="SMR" id="A5VUU3"/>
<dbReference type="KEGG" id="bov:BOV_A0576"/>
<dbReference type="HOGENOM" id="CLU_000445_69_17_5"/>
<dbReference type="PRO" id="PR:A5VUU3"/>
<dbReference type="Proteomes" id="UP000006383">
    <property type="component" value="Chromosome II"/>
</dbReference>
<dbReference type="GO" id="GO:0005737">
    <property type="term" value="C:cytoplasm"/>
    <property type="evidence" value="ECO:0007669"/>
    <property type="project" value="UniProtKB-SubCell"/>
</dbReference>
<dbReference type="GO" id="GO:0003677">
    <property type="term" value="F:DNA binding"/>
    <property type="evidence" value="ECO:0007669"/>
    <property type="project" value="UniProtKB-KW"/>
</dbReference>
<dbReference type="GO" id="GO:0000160">
    <property type="term" value="P:phosphorelay signal transduction system"/>
    <property type="evidence" value="ECO:0007669"/>
    <property type="project" value="UniProtKB-KW"/>
</dbReference>
<dbReference type="CDD" id="cd17548">
    <property type="entry name" value="REC_DivK-like"/>
    <property type="match status" value="1"/>
</dbReference>
<dbReference type="Gene3D" id="3.40.50.2300">
    <property type="match status" value="1"/>
</dbReference>
<dbReference type="InterPro" id="IPR050595">
    <property type="entry name" value="Bact_response_regulator"/>
</dbReference>
<dbReference type="InterPro" id="IPR011006">
    <property type="entry name" value="CheY-like_superfamily"/>
</dbReference>
<dbReference type="InterPro" id="IPR001789">
    <property type="entry name" value="Sig_transdc_resp-reg_receiver"/>
</dbReference>
<dbReference type="PANTHER" id="PTHR44591:SF3">
    <property type="entry name" value="RESPONSE REGULATORY DOMAIN-CONTAINING PROTEIN"/>
    <property type="match status" value="1"/>
</dbReference>
<dbReference type="PANTHER" id="PTHR44591">
    <property type="entry name" value="STRESS RESPONSE REGULATOR PROTEIN 1"/>
    <property type="match status" value="1"/>
</dbReference>
<dbReference type="Pfam" id="PF00072">
    <property type="entry name" value="Response_reg"/>
    <property type="match status" value="1"/>
</dbReference>
<dbReference type="SMART" id="SM00448">
    <property type="entry name" value="REC"/>
    <property type="match status" value="1"/>
</dbReference>
<dbReference type="SUPFAM" id="SSF52172">
    <property type="entry name" value="CheY-like"/>
    <property type="match status" value="1"/>
</dbReference>
<dbReference type="PROSITE" id="PS50110">
    <property type="entry name" value="RESPONSE_REGULATORY"/>
    <property type="match status" value="1"/>
</dbReference>
<sequence>MTKSVMIVEDNELNMKLFRDLIEASGYETIRTRSGLEALDLAREHHPDLILMDIQLPEVSGLEVTKWLKDDEELRHIPVIAVTAFAMKGDEERIRQGGCEAYISKPISVPRFIETIKSYLGDA</sequence>
<gene>
    <name type="primary">divK</name>
    <name type="ordered locus">BOV_A0576</name>
</gene>
<organism>
    <name type="scientific">Brucella ovis (strain ATCC 25840 / 63/290 / NCTC 10512)</name>
    <dbReference type="NCBI Taxonomy" id="444178"/>
    <lineage>
        <taxon>Bacteria</taxon>
        <taxon>Pseudomonadati</taxon>
        <taxon>Pseudomonadota</taxon>
        <taxon>Alphaproteobacteria</taxon>
        <taxon>Hyphomicrobiales</taxon>
        <taxon>Brucellaceae</taxon>
        <taxon>Brucella/Ochrobactrum group</taxon>
        <taxon>Brucella</taxon>
    </lineage>
</organism>
<name>DIVK_BRUO2</name>
<proteinExistence type="inferred from homology"/>
<reference key="1">
    <citation type="journal article" date="2009" name="PLoS ONE">
        <title>Genome degradation in Brucella ovis corresponds with narrowing of its host range and tissue tropism.</title>
        <authorList>
            <person name="Tsolis R.M."/>
            <person name="Seshadri R."/>
            <person name="Santos R.L."/>
            <person name="Sangari F.J."/>
            <person name="Lobo J.M."/>
            <person name="de Jong M.F."/>
            <person name="Ren Q."/>
            <person name="Myers G."/>
            <person name="Brinkac L.M."/>
            <person name="Nelson W.C."/>
            <person name="Deboy R.T."/>
            <person name="Angiuoli S."/>
            <person name="Khouri H."/>
            <person name="Dimitrov G."/>
            <person name="Robinson J.R."/>
            <person name="Mulligan S."/>
            <person name="Walker R.L."/>
            <person name="Elzer P.E."/>
            <person name="Hassan K.A."/>
            <person name="Paulsen I.T."/>
        </authorList>
    </citation>
    <scope>NUCLEOTIDE SEQUENCE [LARGE SCALE GENOMIC DNA]</scope>
    <source>
        <strain>ATCC 25840 / 63/290 / NCTC 10512</strain>
    </source>
</reference>
<comment type="function">
    <text evidence="1">Essential protein that is involved in the control of cell division, probably through the regulation of ctrA. Its phosphorylation status is regulated by PdhS (By similarity).</text>
</comment>
<comment type="subunit">
    <text evidence="1">Interacts with DivL, PleC, DivJ and PdhS.</text>
</comment>
<comment type="subcellular location">
    <subcellularLocation>
        <location evidence="1">Cytoplasm</location>
    </subcellularLocation>
    <text evidence="1">Localized at one pole of the cell. Colocalizes with PdhS (By similarity).</text>
</comment>
<comment type="sequence caution" evidence="3">
    <conflict type="erroneous initiation">
        <sequence resource="EMBL-CDS" id="ABQ62265"/>
    </conflict>
</comment>